<feature type="chain" id="PRO_0000324174" description="Solute carrier family 22 member 6">
    <location>
        <begin position="1"/>
        <end position="562"/>
    </location>
</feature>
<feature type="topological domain" description="Cytoplasmic" evidence="4">
    <location>
        <begin position="1"/>
        <end position="15"/>
    </location>
</feature>
<feature type="transmembrane region" description="Helical" evidence="4">
    <location>
        <begin position="16"/>
        <end position="36"/>
    </location>
</feature>
<feature type="topological domain" description="Extracellular" evidence="4">
    <location>
        <begin position="37"/>
        <end position="147"/>
    </location>
</feature>
<feature type="transmembrane region" description="Helical" evidence="4">
    <location>
        <begin position="148"/>
        <end position="168"/>
    </location>
</feature>
<feature type="topological domain" description="Cytoplasmic" evidence="4">
    <location>
        <begin position="169"/>
        <end position="174"/>
    </location>
</feature>
<feature type="transmembrane region" description="Helical" evidence="4">
    <location>
        <begin position="175"/>
        <end position="195"/>
    </location>
</feature>
<feature type="topological domain" description="Extracellular" evidence="4">
    <location>
        <begin position="196"/>
        <end position="205"/>
    </location>
</feature>
<feature type="transmembrane region" description="Helical" evidence="4">
    <location>
        <begin position="206"/>
        <end position="226"/>
    </location>
</feature>
<feature type="topological domain" description="Cytoplasmic" evidence="4">
    <location>
        <begin position="227"/>
        <end position="235"/>
    </location>
</feature>
<feature type="transmembrane region" description="Helical" evidence="4">
    <location>
        <begin position="236"/>
        <end position="256"/>
    </location>
</feature>
<feature type="topological domain" description="Extracellular" evidence="4">
    <location>
        <begin position="257"/>
        <end position="260"/>
    </location>
</feature>
<feature type="transmembrane region" description="Helical" evidence="4">
    <location>
        <begin position="261"/>
        <end position="281"/>
    </location>
</feature>
<feature type="topological domain" description="Cytoplasmic" evidence="4">
    <location>
        <begin position="282"/>
        <end position="351"/>
    </location>
</feature>
<feature type="transmembrane region" description="Helical" evidence="4">
    <location>
        <begin position="352"/>
        <end position="372"/>
    </location>
</feature>
<feature type="topological domain" description="Extracellular" evidence="4">
    <location>
        <begin position="373"/>
        <end position="378"/>
    </location>
</feature>
<feature type="transmembrane region" description="Helical" evidence="4">
    <location>
        <begin position="379"/>
        <end position="399"/>
    </location>
</feature>
<feature type="topological domain" description="Cytoplasmic" evidence="4">
    <location>
        <begin position="400"/>
        <end position="408"/>
    </location>
</feature>
<feature type="transmembrane region" description="Helical" evidence="4">
    <location>
        <begin position="409"/>
        <end position="429"/>
    </location>
</feature>
<feature type="topological domain" description="Extracellular" evidence="4">
    <location>
        <begin position="430"/>
        <end position="444"/>
    </location>
</feature>
<feature type="transmembrane region" description="Helical" evidence="4">
    <location>
        <begin position="445"/>
        <end position="465"/>
    </location>
</feature>
<feature type="topological domain" description="Cytoplasmic" evidence="4">
    <location>
        <begin position="466"/>
        <end position="468"/>
    </location>
</feature>
<feature type="transmembrane region" description="Helical" evidence="4">
    <location>
        <begin position="469"/>
        <end position="489"/>
    </location>
</feature>
<feature type="topological domain" description="Extracellular" evidence="4">
    <location>
        <begin position="490"/>
        <end position="495"/>
    </location>
</feature>
<feature type="transmembrane region" description="Helical" evidence="4">
    <location>
        <begin position="496"/>
        <end position="516"/>
    </location>
</feature>
<feature type="topological domain" description="Cytoplasmic" evidence="4">
    <location>
        <begin position="517"/>
        <end position="562"/>
    </location>
</feature>
<feature type="mutagenesis site" description="Reduced transport activity." evidence="5">
    <original>H</original>
    <variation>I</variation>
    <location>
        <position position="34"/>
    </location>
</feature>
<feature type="mutagenesis site" description="Reduced transport activity." evidence="5">
    <original>K</original>
    <variation>A</variation>
    <location>
        <position position="394"/>
    </location>
</feature>
<feature type="mutagenesis site" description="Reduced transport activity." evidence="5">
    <original>R</original>
    <variation>D</variation>
    <location>
        <position position="478"/>
    </location>
</feature>
<dbReference type="EMBL" id="Z97028">
    <property type="protein sequence ID" value="CAB09724.1"/>
    <property type="molecule type" value="mRNA"/>
</dbReference>
<dbReference type="SMR" id="O57379"/>
<dbReference type="SABIO-RK" id="O57379"/>
<dbReference type="GO" id="GO:0009925">
    <property type="term" value="C:basal plasma membrane"/>
    <property type="evidence" value="ECO:0000250"/>
    <property type="project" value="UniProtKB"/>
</dbReference>
<dbReference type="GO" id="GO:0016323">
    <property type="term" value="C:basolateral plasma membrane"/>
    <property type="evidence" value="ECO:0007669"/>
    <property type="project" value="UniProtKB-SubCell"/>
</dbReference>
<dbReference type="GO" id="GO:0022857">
    <property type="term" value="F:transmembrane transporter activity"/>
    <property type="evidence" value="ECO:0007669"/>
    <property type="project" value="InterPro"/>
</dbReference>
<dbReference type="FunFam" id="1.20.1250.20:FF:000023">
    <property type="entry name" value="Solute carrier family 22 member 6"/>
    <property type="match status" value="1"/>
</dbReference>
<dbReference type="Gene3D" id="1.20.1250.20">
    <property type="entry name" value="MFS general substrate transporter like domains"/>
    <property type="match status" value="1"/>
</dbReference>
<dbReference type="InterPro" id="IPR020846">
    <property type="entry name" value="MFS_dom"/>
</dbReference>
<dbReference type="InterPro" id="IPR005828">
    <property type="entry name" value="MFS_sugar_transport-like"/>
</dbReference>
<dbReference type="InterPro" id="IPR036259">
    <property type="entry name" value="MFS_trans_sf"/>
</dbReference>
<dbReference type="PANTHER" id="PTHR24064">
    <property type="entry name" value="SOLUTE CARRIER FAMILY 22 MEMBER"/>
    <property type="match status" value="1"/>
</dbReference>
<dbReference type="Pfam" id="PF00083">
    <property type="entry name" value="Sugar_tr"/>
    <property type="match status" value="1"/>
</dbReference>
<dbReference type="SUPFAM" id="SSF103473">
    <property type="entry name" value="MFS general substrate transporter"/>
    <property type="match status" value="1"/>
</dbReference>
<dbReference type="PROSITE" id="PS50850">
    <property type="entry name" value="MFS"/>
    <property type="match status" value="1"/>
</dbReference>
<organism>
    <name type="scientific">Pseudopleuronectes americanus</name>
    <name type="common">Winter flounder</name>
    <name type="synonym">Pleuronectes americanus</name>
    <dbReference type="NCBI Taxonomy" id="8265"/>
    <lineage>
        <taxon>Eukaryota</taxon>
        <taxon>Metazoa</taxon>
        <taxon>Chordata</taxon>
        <taxon>Craniata</taxon>
        <taxon>Vertebrata</taxon>
        <taxon>Euteleostomi</taxon>
        <taxon>Actinopterygii</taxon>
        <taxon>Neopterygii</taxon>
        <taxon>Teleostei</taxon>
        <taxon>Neoteleostei</taxon>
        <taxon>Acanthomorphata</taxon>
        <taxon>Carangaria</taxon>
        <taxon>Pleuronectiformes</taxon>
        <taxon>Pleuronectoidei</taxon>
        <taxon>Pleuronectidae</taxon>
        <taxon>Pseudopleuronectes</taxon>
    </lineage>
</organism>
<comment type="function">
    <text evidence="1 5">Involved in the renal elimination of endogenous and exogenous organic anions. Functions as organic anion exchanger when the uptake of one molecule of organic anion is coupled with an efflux of one molecule of endogenous dicarboxylic acid (glutarate, ketoglutarate, etc). Mediates the sodium-independent uptake of p-aminohippurate (PAH), 2,3-dimercapto-1-propanesulfonic acid (DMPS), cidofovir, adefovir, 9-(2-phosphonylmethoxyethyl) guanine (PMEG), 9-(2-phosphonylmethoxyethyl) diaminopurine (PMEDAP), ochratoxin (OTA), acyclovir (ACV), 3'-azido-3-'deoxythymidine (AZT), cimetidine (CMD), 2,4-dichloro-phenoxyacetate (2,4-D), hippurate (HA), indoleacetate (IA), indoxyl sulfate (IS), 3-carboxy-4-methyl-5-propyl-2-furanpropionate (CMPF) and edaravone sulfate (By similarity). Mediates the sodium-independent uptake of p-aminohippurate (PAH). PAH uptake is inhibited by p-chloromercuribenzenesulphonate (PCMBS), diethyl pyrocarbonate (DEPC), indomethacin, sulindac, diclofenac, carprofen, okadaic acid, benzothiazolylcysteine (BTC), S-chlorotrifluoroethylcysteine (CTFC), cysteine S-conjugates S-dichlorovinylcysteine (DCVC), furosemide, steviol, phorbol 12-myristate 13-acetate (PMA), calcium ionophore A23187, benzylpenicillin, bumetamide, losartan, probenecid, phenol red, urate, glutarate and alpha-ketoglutarate (By similarity). PAH uptake is inhibited by glutarate.</text>
</comment>
<comment type="biophysicochemical properties">
    <kinetics>
        <KM evidence="5">20 uM for PAH</KM>
    </kinetics>
</comment>
<comment type="subcellular location">
    <subcellularLocation>
        <location evidence="3">Cell membrane</location>
        <topology evidence="3">Multi-pass membrane protein</topology>
    </subcellularLocation>
    <subcellularLocation>
        <location evidence="2">Basolateral cell membrane</location>
        <topology evidence="6">Multi-pass membrane protein</topology>
    </subcellularLocation>
    <subcellularLocation>
        <location evidence="2">Basal cell membrane</location>
        <topology evidence="6">Multi-pass membrane protein</topology>
    </subcellularLocation>
</comment>
<comment type="domain">
    <text evidence="1">Multiple cysteine residues are necessary for proper targeting to the plasma membrane.</text>
</comment>
<comment type="PTM">
    <text evidence="1">Glycosylated. Glycosylation is necessary for proper targeting of the transporter to the plasma membrane (By similarity).</text>
</comment>
<comment type="similarity">
    <text evidence="6">Belongs to the major facilitator (TC 2.A.1) superfamily. Organic cation transporter (TC 2.A.1.19) family.</text>
</comment>
<proteinExistence type="evidence at protein level"/>
<gene>
    <name type="primary">SLC22A6</name>
    <name type="synonym">OAT1</name>
</gene>
<name>S22A6_PSEAM</name>
<keyword id="KW-1003">Cell membrane</keyword>
<keyword id="KW-0472">Membrane</keyword>
<keyword id="KW-0812">Transmembrane</keyword>
<keyword id="KW-1133">Transmembrane helix</keyword>
<reference key="1">
    <citation type="journal article" date="1997" name="FEBS Lett.">
        <title>Expression cloning and characterization of a renal organic anion transporter from winter flounder.</title>
        <authorList>
            <person name="Wolff N.A."/>
            <person name="Werner A."/>
            <person name="Burkhardt S."/>
            <person name="Burckhardt G."/>
        </authorList>
    </citation>
    <scope>NUCLEOTIDE SEQUENCE [MRNA]</scope>
    <scope>BIOPHYSICOCHEMICAL PROPERTIES</scope>
    <scope>FUNCTION</scope>
    <scope>MUTAGENESIS OF HIS-34; LYS-394 AND ARG-478</scope>
    <source>
        <tissue>Kidney</tissue>
    </source>
</reference>
<protein>
    <recommendedName>
        <fullName>Solute carrier family 22 member 6</fullName>
    </recommendedName>
    <alternativeName>
        <fullName>Organic anion transporter 1</fullName>
    </alternativeName>
    <alternativeName>
        <fullName>Renal organic anion transporter 1</fullName>
        <shortName>ROAT1</shortName>
    </alternativeName>
    <alternativeName>
        <fullName>fROAT1</fullName>
    </alternativeName>
</protein>
<accession>O57379</accession>
<sequence>MPFSELLEQVGSTGRFQVLHVTLLCIPVLMMASHNLLQNFVATVPSHYCNAHANLSQARLSLEESLLITVPLDGAGKPQRCQRYAAPQWHLLGKNGTSGSGDLADATESMDAALQECSDGWSYNSTVRSSTIISEWHLVCDMHSFKQMGQTIYMGGVLVGALLFGGLSDRYGRRILLLISNLLMAVSGTCAAFSSSFSLFCVFRFGCGLALSGLGLNTFSLIVEWIPTRIRTAVGTTTGYCYTLGQLILVLLAYFIRDWRWLTLAVSLPFYVFFLIAWWFHESSRWLALSNRTEHALKNLKSVARFNGRHEEAEKLDIKMLHESMKKEMSCTQGSYSILDLFNTPAMRKRTLCLSAVWLSTSFAYYGLAMDLDKFGVDIYLIQVIFGAVDIPAKVVVVVSMSLIGRRRSQCAVLVVAGITILLNLLVPYDKQTIRTCLAVLGKGCLAASFNCCYLYSGELFPTIIRQNGMGWVSMMARIGAMVAPMVLLTRDYIPWLPGLIYGGAPILSGLAAIFLPETLGYPLPDTIQDVEESGSGRKSKMSTKETITLQDKQANLLKQSA</sequence>
<evidence type="ECO:0000250" key="1"/>
<evidence type="ECO:0000250" key="2">
    <source>
        <dbReference type="UniProtKB" id="Q4U2R8"/>
    </source>
</evidence>
<evidence type="ECO:0000250" key="3">
    <source>
        <dbReference type="UniProtKB" id="Q8VC69"/>
    </source>
</evidence>
<evidence type="ECO:0000255" key="4"/>
<evidence type="ECO:0000269" key="5">
    <source>
    </source>
</evidence>
<evidence type="ECO:0000305" key="6"/>